<keyword id="KW-0030">Aminoacyl-tRNA synthetase</keyword>
<keyword id="KW-0067">ATP-binding</keyword>
<keyword id="KW-0963">Cytoplasm</keyword>
<keyword id="KW-0436">Ligase</keyword>
<keyword id="KW-0479">Metal-binding</keyword>
<keyword id="KW-0547">Nucleotide-binding</keyword>
<keyword id="KW-0648">Protein biosynthesis</keyword>
<keyword id="KW-0862">Zinc</keyword>
<comment type="function">
    <text evidence="1">Catalyzes the attachment of isoleucine to tRNA(Ile). As IleRS can inadvertently accommodate and process structurally similar amino acids such as valine, to avoid such errors it has two additional distinct tRNA(Ile)-dependent editing activities. One activity is designated as 'pretransfer' editing and involves the hydrolysis of activated Val-AMP. The other activity is designated 'posttransfer' editing and involves deacylation of mischarged Val-tRNA(Ile).</text>
</comment>
<comment type="catalytic activity">
    <reaction evidence="1">
        <text>tRNA(Ile) + L-isoleucine + ATP = L-isoleucyl-tRNA(Ile) + AMP + diphosphate</text>
        <dbReference type="Rhea" id="RHEA:11060"/>
        <dbReference type="Rhea" id="RHEA-COMP:9666"/>
        <dbReference type="Rhea" id="RHEA-COMP:9695"/>
        <dbReference type="ChEBI" id="CHEBI:30616"/>
        <dbReference type="ChEBI" id="CHEBI:33019"/>
        <dbReference type="ChEBI" id="CHEBI:58045"/>
        <dbReference type="ChEBI" id="CHEBI:78442"/>
        <dbReference type="ChEBI" id="CHEBI:78528"/>
        <dbReference type="ChEBI" id="CHEBI:456215"/>
        <dbReference type="EC" id="6.1.1.5"/>
    </reaction>
</comment>
<comment type="cofactor">
    <cofactor evidence="1">
        <name>Zn(2+)</name>
        <dbReference type="ChEBI" id="CHEBI:29105"/>
    </cofactor>
    <text evidence="1">Binds 1 zinc ion per subunit.</text>
</comment>
<comment type="subunit">
    <text evidence="1">Monomer.</text>
</comment>
<comment type="subcellular location">
    <subcellularLocation>
        <location evidence="1">Cytoplasm</location>
    </subcellularLocation>
</comment>
<comment type="domain">
    <text evidence="1">IleRS has two distinct active sites: one for aminoacylation and one for editing. The misactivated valine is translocated from the active site to the editing site, which sterically excludes the correctly activated isoleucine. The single editing site contains two valyl binding pockets, one specific for each substrate (Val-AMP or Val-tRNA(Ile)).</text>
</comment>
<comment type="similarity">
    <text evidence="1">Belongs to the class-I aminoacyl-tRNA synthetase family. IleS type 1 subfamily.</text>
</comment>
<proteinExistence type="inferred from homology"/>
<sequence>MSDYKDTLNLPKTSFSMKGNLANKEPMILNKWEKQGIYKKIREHFAGREKFILHDGPPYANGSIHVGHAVNKILKDIIIKSKTLSGYDAPFTPTWDCHGLPIELQVEKKHGKAGQSISEDDFRKECRKYAKKQVEIQKKDFKRLGVLGDWEQPYLTINFDYEANMIRTLAKIIENGHLSKGFKPVHWCTDCGSALAEAEVEYADKVSPAIDVKFKIKDKDKLAQAFGLDSLNHDAFAIIWTTTPWTLPANQAIAVNNQLNYSLIKIEDFYIILAENLVEQTLKRYAIENAQIIATTTGNKLTGIIAEHPFYSRHVPILHGDHVTDDSGTGLVHTAPTHGVDDFTLGKEHNLSMEIFVKGNGCYSENTKLFAGEFIFKANDRIIELLGEKKRLMNSDKIKHSYPHCWRHKTPLMFRATPQWFISMEKQGLRDKALQAIKETSWAPSWGQARIEGMVKDRPDWCISRQRTWGVPLSLFIHKETEELHPNTIEILYKVAEKIEKDGIEAWFNADDCEFITETAQYKSVKDTLDVWFDSGSSSMCILDLDKRLSYPADLYLEGSDQHRGWFQTSLLVAMSAKGSQPYKEVFTHGFVVDEHGRKMSKSLGNVTSPQDIYNTLGADILRLWTASTDYKSEMAVSDQILKRTADTYRRLRNTARFLLSNLDGFNPVTDIIEFDKLVKLDQWAIAKTKEFQDKIIEAYDKYQTHTVAQLIHHFCSIEMGSFYLDIIKDRQYTAKTDGHPRKSAQTAIYHIVHALVRWMAPILSFTADEIWDATLKTTDLPIQLCEWYTGLKSFDQDAELDLEYWAKIQEIRSEVNRVLEIKRNEDVIKASLEAEITIYADKYNYKLLEKLGNELRFLLISSKADLKVIEESTSSSIAANIPGLLIEITKIEEPKCERCWHRSSTVGDNPQYKDICSRCVENITTEAGESREFA</sequence>
<evidence type="ECO:0000255" key="1">
    <source>
        <dbReference type="HAMAP-Rule" id="MF_02002"/>
    </source>
</evidence>
<gene>
    <name evidence="1" type="primary">ileS</name>
    <name type="ordered locus">FTM_0503</name>
</gene>
<accession>B2SF88</accession>
<organism>
    <name type="scientific">Francisella tularensis subsp. mediasiatica (strain FSC147)</name>
    <dbReference type="NCBI Taxonomy" id="441952"/>
    <lineage>
        <taxon>Bacteria</taxon>
        <taxon>Pseudomonadati</taxon>
        <taxon>Pseudomonadota</taxon>
        <taxon>Gammaproteobacteria</taxon>
        <taxon>Thiotrichales</taxon>
        <taxon>Francisellaceae</taxon>
        <taxon>Francisella</taxon>
    </lineage>
</organism>
<name>SYI_FRATM</name>
<reference key="1">
    <citation type="journal article" date="2009" name="PLoS Pathog.">
        <title>Molecular evolutionary consequences of niche restriction in Francisella tularensis, a facultative intracellular pathogen.</title>
        <authorList>
            <person name="Larsson P."/>
            <person name="Elfsmark D."/>
            <person name="Svensson K."/>
            <person name="Wikstroem P."/>
            <person name="Forsman M."/>
            <person name="Brettin T."/>
            <person name="Keim P."/>
            <person name="Johansson A."/>
        </authorList>
    </citation>
    <scope>NUCLEOTIDE SEQUENCE [LARGE SCALE GENOMIC DNA]</scope>
    <source>
        <strain>FSC147</strain>
    </source>
</reference>
<protein>
    <recommendedName>
        <fullName evidence="1">Isoleucine--tRNA ligase</fullName>
        <ecNumber evidence="1">6.1.1.5</ecNumber>
    </recommendedName>
    <alternativeName>
        <fullName evidence="1">Isoleucyl-tRNA synthetase</fullName>
        <shortName evidence="1">IleRS</shortName>
    </alternativeName>
</protein>
<dbReference type="EC" id="6.1.1.5" evidence="1"/>
<dbReference type="EMBL" id="CP000915">
    <property type="protein sequence ID" value="ACD30520.1"/>
    <property type="molecule type" value="Genomic_DNA"/>
</dbReference>
<dbReference type="SMR" id="B2SF88"/>
<dbReference type="KEGG" id="ftm:FTM_0503"/>
<dbReference type="HOGENOM" id="CLU_001493_7_1_6"/>
<dbReference type="GO" id="GO:0005829">
    <property type="term" value="C:cytosol"/>
    <property type="evidence" value="ECO:0007669"/>
    <property type="project" value="TreeGrafter"/>
</dbReference>
<dbReference type="GO" id="GO:0002161">
    <property type="term" value="F:aminoacyl-tRNA deacylase activity"/>
    <property type="evidence" value="ECO:0007669"/>
    <property type="project" value="InterPro"/>
</dbReference>
<dbReference type="GO" id="GO:0005524">
    <property type="term" value="F:ATP binding"/>
    <property type="evidence" value="ECO:0007669"/>
    <property type="project" value="UniProtKB-UniRule"/>
</dbReference>
<dbReference type="GO" id="GO:0004822">
    <property type="term" value="F:isoleucine-tRNA ligase activity"/>
    <property type="evidence" value="ECO:0007669"/>
    <property type="project" value="UniProtKB-UniRule"/>
</dbReference>
<dbReference type="GO" id="GO:0000049">
    <property type="term" value="F:tRNA binding"/>
    <property type="evidence" value="ECO:0007669"/>
    <property type="project" value="InterPro"/>
</dbReference>
<dbReference type="GO" id="GO:0008270">
    <property type="term" value="F:zinc ion binding"/>
    <property type="evidence" value="ECO:0007669"/>
    <property type="project" value="UniProtKB-UniRule"/>
</dbReference>
<dbReference type="GO" id="GO:0006428">
    <property type="term" value="P:isoleucyl-tRNA aminoacylation"/>
    <property type="evidence" value="ECO:0007669"/>
    <property type="project" value="UniProtKB-UniRule"/>
</dbReference>
<dbReference type="CDD" id="cd07960">
    <property type="entry name" value="Anticodon_Ia_Ile_BEm"/>
    <property type="match status" value="1"/>
</dbReference>
<dbReference type="CDD" id="cd00818">
    <property type="entry name" value="IleRS_core"/>
    <property type="match status" value="1"/>
</dbReference>
<dbReference type="FunFam" id="1.10.730.20:FF:000001">
    <property type="entry name" value="Isoleucine--tRNA ligase"/>
    <property type="match status" value="1"/>
</dbReference>
<dbReference type="FunFam" id="3.40.50.620:FF:000042">
    <property type="entry name" value="Isoleucine--tRNA ligase"/>
    <property type="match status" value="1"/>
</dbReference>
<dbReference type="FunFam" id="3.40.50.620:FF:000048">
    <property type="entry name" value="Isoleucine--tRNA ligase"/>
    <property type="match status" value="1"/>
</dbReference>
<dbReference type="Gene3D" id="1.10.730.20">
    <property type="match status" value="1"/>
</dbReference>
<dbReference type="Gene3D" id="3.40.50.620">
    <property type="entry name" value="HUPs"/>
    <property type="match status" value="2"/>
</dbReference>
<dbReference type="Gene3D" id="3.90.740.10">
    <property type="entry name" value="Valyl/Leucyl/Isoleucyl-tRNA synthetase, editing domain"/>
    <property type="match status" value="1"/>
</dbReference>
<dbReference type="HAMAP" id="MF_02002">
    <property type="entry name" value="Ile_tRNA_synth_type1"/>
    <property type="match status" value="1"/>
</dbReference>
<dbReference type="InterPro" id="IPR001412">
    <property type="entry name" value="aa-tRNA-synth_I_CS"/>
</dbReference>
<dbReference type="InterPro" id="IPR002300">
    <property type="entry name" value="aa-tRNA-synth_Ia"/>
</dbReference>
<dbReference type="InterPro" id="IPR033708">
    <property type="entry name" value="Anticodon_Ile_BEm"/>
</dbReference>
<dbReference type="InterPro" id="IPR002301">
    <property type="entry name" value="Ile-tRNA-ligase"/>
</dbReference>
<dbReference type="InterPro" id="IPR023585">
    <property type="entry name" value="Ile-tRNA-ligase_type1"/>
</dbReference>
<dbReference type="InterPro" id="IPR050081">
    <property type="entry name" value="Ile-tRNA_ligase"/>
</dbReference>
<dbReference type="InterPro" id="IPR013155">
    <property type="entry name" value="M/V/L/I-tRNA-synth_anticd-bd"/>
</dbReference>
<dbReference type="InterPro" id="IPR014729">
    <property type="entry name" value="Rossmann-like_a/b/a_fold"/>
</dbReference>
<dbReference type="InterPro" id="IPR009080">
    <property type="entry name" value="tRNAsynth_Ia_anticodon-bd"/>
</dbReference>
<dbReference type="InterPro" id="IPR009008">
    <property type="entry name" value="Val/Leu/Ile-tRNA-synth_edit"/>
</dbReference>
<dbReference type="InterPro" id="IPR010663">
    <property type="entry name" value="Znf_FPG/IleRS"/>
</dbReference>
<dbReference type="NCBIfam" id="TIGR00392">
    <property type="entry name" value="ileS"/>
    <property type="match status" value="1"/>
</dbReference>
<dbReference type="PANTHER" id="PTHR42765:SF1">
    <property type="entry name" value="ISOLEUCINE--TRNA LIGASE, MITOCHONDRIAL"/>
    <property type="match status" value="1"/>
</dbReference>
<dbReference type="PANTHER" id="PTHR42765">
    <property type="entry name" value="SOLEUCYL-TRNA SYNTHETASE"/>
    <property type="match status" value="1"/>
</dbReference>
<dbReference type="Pfam" id="PF08264">
    <property type="entry name" value="Anticodon_1"/>
    <property type="match status" value="1"/>
</dbReference>
<dbReference type="Pfam" id="PF00133">
    <property type="entry name" value="tRNA-synt_1"/>
    <property type="match status" value="1"/>
</dbReference>
<dbReference type="Pfam" id="PF06827">
    <property type="entry name" value="zf-FPG_IleRS"/>
    <property type="match status" value="1"/>
</dbReference>
<dbReference type="PRINTS" id="PR00984">
    <property type="entry name" value="TRNASYNTHILE"/>
</dbReference>
<dbReference type="SUPFAM" id="SSF47323">
    <property type="entry name" value="Anticodon-binding domain of a subclass of class I aminoacyl-tRNA synthetases"/>
    <property type="match status" value="1"/>
</dbReference>
<dbReference type="SUPFAM" id="SSF52374">
    <property type="entry name" value="Nucleotidylyl transferase"/>
    <property type="match status" value="1"/>
</dbReference>
<dbReference type="SUPFAM" id="SSF50677">
    <property type="entry name" value="ValRS/IleRS/LeuRS editing domain"/>
    <property type="match status" value="1"/>
</dbReference>
<dbReference type="PROSITE" id="PS00178">
    <property type="entry name" value="AA_TRNA_LIGASE_I"/>
    <property type="match status" value="1"/>
</dbReference>
<feature type="chain" id="PRO_1000189167" description="Isoleucine--tRNA ligase">
    <location>
        <begin position="1"/>
        <end position="935"/>
    </location>
</feature>
<feature type="short sequence motif" description="'HIGH' region">
    <location>
        <begin position="58"/>
        <end position="68"/>
    </location>
</feature>
<feature type="short sequence motif" description="'KMSKS' region">
    <location>
        <begin position="599"/>
        <end position="603"/>
    </location>
</feature>
<feature type="binding site" evidence="1">
    <location>
        <position position="558"/>
    </location>
    <ligand>
        <name>L-isoleucyl-5'-AMP</name>
        <dbReference type="ChEBI" id="CHEBI:178002"/>
    </ligand>
</feature>
<feature type="binding site" evidence="1">
    <location>
        <position position="602"/>
    </location>
    <ligand>
        <name>ATP</name>
        <dbReference type="ChEBI" id="CHEBI:30616"/>
    </ligand>
</feature>
<feature type="binding site" evidence="1">
    <location>
        <position position="897"/>
    </location>
    <ligand>
        <name>Zn(2+)</name>
        <dbReference type="ChEBI" id="CHEBI:29105"/>
    </ligand>
</feature>
<feature type="binding site" evidence="1">
    <location>
        <position position="900"/>
    </location>
    <ligand>
        <name>Zn(2+)</name>
        <dbReference type="ChEBI" id="CHEBI:29105"/>
    </ligand>
</feature>
<feature type="binding site" evidence="1">
    <location>
        <position position="917"/>
    </location>
    <ligand>
        <name>Zn(2+)</name>
        <dbReference type="ChEBI" id="CHEBI:29105"/>
    </ligand>
</feature>
<feature type="binding site" evidence="1">
    <location>
        <position position="920"/>
    </location>
    <ligand>
        <name>Zn(2+)</name>
        <dbReference type="ChEBI" id="CHEBI:29105"/>
    </ligand>
</feature>